<proteinExistence type="inferred from homology"/>
<evidence type="ECO:0000255" key="1">
    <source>
        <dbReference type="HAMAP-Rule" id="MF_01326"/>
    </source>
</evidence>
<evidence type="ECO:0000305" key="2"/>
<protein>
    <recommendedName>
        <fullName evidence="1">Large ribosomal subunit protein uL24</fullName>
    </recommendedName>
    <alternativeName>
        <fullName evidence="2">50S ribosomal protein L24</fullName>
    </alternativeName>
</protein>
<feature type="chain" id="PRO_1000165958" description="Large ribosomal subunit protein uL24">
    <location>
        <begin position="1"/>
        <end position="115"/>
    </location>
</feature>
<gene>
    <name evidence="1" type="primary">rplX</name>
    <name type="ordered locus">ATP_00352</name>
</gene>
<sequence>MHIKLGDKVAIIAGKNRFVTDENGKKIIKTGKILKIFHKQQKVLVEGINIVFKHKAPLKDEDKGNIIKQEAPIHISNVALIDSLKNVPTRVGYRIENNKKVRYFKKSGTIIEDLN</sequence>
<reference key="1">
    <citation type="journal article" date="2008" name="BMC Genomics">
        <title>The linear chromosome of the plant-pathogenic mycoplasma 'Candidatus Phytoplasma mali'.</title>
        <authorList>
            <person name="Kube M."/>
            <person name="Schneider B."/>
            <person name="Kuhl H."/>
            <person name="Dandekar T."/>
            <person name="Heitmann K."/>
            <person name="Migdoll A.M."/>
            <person name="Reinhardt R."/>
            <person name="Seemueller E."/>
        </authorList>
    </citation>
    <scope>NUCLEOTIDE SEQUENCE [LARGE SCALE GENOMIC DNA]</scope>
    <source>
        <strain>AT</strain>
    </source>
</reference>
<comment type="function">
    <text evidence="1">One of two assembly initiator proteins, it binds directly to the 5'-end of the 23S rRNA, where it nucleates assembly of the 50S subunit.</text>
</comment>
<comment type="function">
    <text evidence="1">One of the proteins that surrounds the polypeptide exit tunnel on the outside of the subunit.</text>
</comment>
<comment type="subunit">
    <text evidence="1">Part of the 50S ribosomal subunit.</text>
</comment>
<comment type="similarity">
    <text evidence="1">Belongs to the universal ribosomal protein uL24 family.</text>
</comment>
<organism>
    <name type="scientific">Phytoplasma mali (strain AT)</name>
    <dbReference type="NCBI Taxonomy" id="482235"/>
    <lineage>
        <taxon>Bacteria</taxon>
        <taxon>Bacillati</taxon>
        <taxon>Mycoplasmatota</taxon>
        <taxon>Mollicutes</taxon>
        <taxon>Acholeplasmatales</taxon>
        <taxon>Acholeplasmataceae</taxon>
        <taxon>Candidatus Phytoplasma</taxon>
        <taxon>16SrX (Apple proliferation group)</taxon>
    </lineage>
</organism>
<dbReference type="EMBL" id="CU469464">
    <property type="protein sequence ID" value="CAP18539.1"/>
    <property type="molecule type" value="Genomic_DNA"/>
</dbReference>
<dbReference type="SMR" id="B3R002"/>
<dbReference type="STRING" id="37692.ATP_00352"/>
<dbReference type="KEGG" id="pml:ATP_00352"/>
<dbReference type="eggNOG" id="COG0198">
    <property type="taxonomic scope" value="Bacteria"/>
</dbReference>
<dbReference type="HOGENOM" id="CLU_093315_2_0_14"/>
<dbReference type="Proteomes" id="UP000002020">
    <property type="component" value="Chromosome"/>
</dbReference>
<dbReference type="GO" id="GO:1990904">
    <property type="term" value="C:ribonucleoprotein complex"/>
    <property type="evidence" value="ECO:0007669"/>
    <property type="project" value="UniProtKB-KW"/>
</dbReference>
<dbReference type="GO" id="GO:0005840">
    <property type="term" value="C:ribosome"/>
    <property type="evidence" value="ECO:0007669"/>
    <property type="project" value="UniProtKB-KW"/>
</dbReference>
<dbReference type="GO" id="GO:0019843">
    <property type="term" value="F:rRNA binding"/>
    <property type="evidence" value="ECO:0007669"/>
    <property type="project" value="UniProtKB-UniRule"/>
</dbReference>
<dbReference type="GO" id="GO:0003735">
    <property type="term" value="F:structural constituent of ribosome"/>
    <property type="evidence" value="ECO:0007669"/>
    <property type="project" value="InterPro"/>
</dbReference>
<dbReference type="GO" id="GO:0006412">
    <property type="term" value="P:translation"/>
    <property type="evidence" value="ECO:0007669"/>
    <property type="project" value="UniProtKB-UniRule"/>
</dbReference>
<dbReference type="CDD" id="cd06089">
    <property type="entry name" value="KOW_RPL26"/>
    <property type="match status" value="1"/>
</dbReference>
<dbReference type="Gene3D" id="2.30.30.30">
    <property type="match status" value="1"/>
</dbReference>
<dbReference type="HAMAP" id="MF_01326_B">
    <property type="entry name" value="Ribosomal_uL24_B"/>
    <property type="match status" value="1"/>
</dbReference>
<dbReference type="InterPro" id="IPR014722">
    <property type="entry name" value="Rib_uL2_dom2"/>
</dbReference>
<dbReference type="InterPro" id="IPR003256">
    <property type="entry name" value="Ribosomal_uL24"/>
</dbReference>
<dbReference type="InterPro" id="IPR041988">
    <property type="entry name" value="Ribosomal_uL24_KOW"/>
</dbReference>
<dbReference type="InterPro" id="IPR008991">
    <property type="entry name" value="Translation_prot_SH3-like_sf"/>
</dbReference>
<dbReference type="NCBIfam" id="TIGR01079">
    <property type="entry name" value="rplX_bact"/>
    <property type="match status" value="1"/>
</dbReference>
<dbReference type="PANTHER" id="PTHR12903">
    <property type="entry name" value="MITOCHONDRIAL RIBOSOMAL PROTEIN L24"/>
    <property type="match status" value="1"/>
</dbReference>
<dbReference type="Pfam" id="PF17136">
    <property type="entry name" value="ribosomal_L24"/>
    <property type="match status" value="1"/>
</dbReference>
<dbReference type="SUPFAM" id="SSF50104">
    <property type="entry name" value="Translation proteins SH3-like domain"/>
    <property type="match status" value="1"/>
</dbReference>
<accession>B3R002</accession>
<name>RL24_PHYMT</name>
<keyword id="KW-1185">Reference proteome</keyword>
<keyword id="KW-0687">Ribonucleoprotein</keyword>
<keyword id="KW-0689">Ribosomal protein</keyword>
<keyword id="KW-0694">RNA-binding</keyword>
<keyword id="KW-0699">rRNA-binding</keyword>